<protein>
    <recommendedName>
        <fullName evidence="1">3-hydroxyacyl-[acyl-carrier-protein] dehydratase FabZ</fullName>
        <ecNumber evidence="1">4.2.1.59</ecNumber>
    </recommendedName>
    <alternativeName>
        <fullName evidence="1">(3R)-hydroxymyristoyl-[acyl-carrier-protein] dehydratase</fullName>
        <shortName evidence="1">(3R)-hydroxymyristoyl-ACP dehydrase</shortName>
    </alternativeName>
    <alternativeName>
        <fullName evidence="1">Beta-hydroxyacyl-ACP dehydratase</fullName>
    </alternativeName>
</protein>
<accession>A2RM26</accession>
<feature type="chain" id="PRO_0000301900" description="3-hydroxyacyl-[acyl-carrier-protein] dehydratase FabZ">
    <location>
        <begin position="1"/>
        <end position="144"/>
    </location>
</feature>
<feature type="active site" evidence="1">
    <location>
        <position position="51"/>
    </location>
</feature>
<reference key="1">
    <citation type="journal article" date="2007" name="J. Bacteriol.">
        <title>The complete genome sequence of the lactic acid bacterial paradigm Lactococcus lactis subsp. cremoris MG1363.</title>
        <authorList>
            <person name="Wegmann U."/>
            <person name="O'Connell-Motherway M."/>
            <person name="Zomer A."/>
            <person name="Buist G."/>
            <person name="Shearman C."/>
            <person name="Canchaya C."/>
            <person name="Ventura M."/>
            <person name="Goesmann A."/>
            <person name="Gasson M.J."/>
            <person name="Kuipers O.P."/>
            <person name="van Sinderen D."/>
            <person name="Kok J."/>
        </authorList>
    </citation>
    <scope>NUCLEOTIDE SEQUENCE [LARGE SCALE GENOMIC DNA]</scope>
    <source>
        <strain>MG1363</strain>
    </source>
</reference>
<evidence type="ECO:0000255" key="1">
    <source>
        <dbReference type="HAMAP-Rule" id="MF_00406"/>
    </source>
</evidence>
<keyword id="KW-0963">Cytoplasm</keyword>
<keyword id="KW-0441">Lipid A biosynthesis</keyword>
<keyword id="KW-0444">Lipid biosynthesis</keyword>
<keyword id="KW-0443">Lipid metabolism</keyword>
<keyword id="KW-0456">Lyase</keyword>
<gene>
    <name evidence="1" type="primary">fabZ</name>
    <name type="ordered locus">llmg_1781</name>
</gene>
<organism>
    <name type="scientific">Lactococcus lactis subsp. cremoris (strain MG1363)</name>
    <dbReference type="NCBI Taxonomy" id="416870"/>
    <lineage>
        <taxon>Bacteria</taxon>
        <taxon>Bacillati</taxon>
        <taxon>Bacillota</taxon>
        <taxon>Bacilli</taxon>
        <taxon>Lactobacillales</taxon>
        <taxon>Streptococcaceae</taxon>
        <taxon>Lactococcus</taxon>
        <taxon>Lactococcus cremoris subsp. cremoris</taxon>
    </lineage>
</organism>
<comment type="function">
    <text evidence="1">Involved in unsaturated fatty acids biosynthesis. Catalyzes the dehydration of short chain beta-hydroxyacyl-ACPs and long chain saturated and unsaturated beta-hydroxyacyl-ACPs.</text>
</comment>
<comment type="catalytic activity">
    <reaction evidence="1">
        <text>a (3R)-hydroxyacyl-[ACP] = a (2E)-enoyl-[ACP] + H2O</text>
        <dbReference type="Rhea" id="RHEA:13097"/>
        <dbReference type="Rhea" id="RHEA-COMP:9925"/>
        <dbReference type="Rhea" id="RHEA-COMP:9945"/>
        <dbReference type="ChEBI" id="CHEBI:15377"/>
        <dbReference type="ChEBI" id="CHEBI:78784"/>
        <dbReference type="ChEBI" id="CHEBI:78827"/>
        <dbReference type="EC" id="4.2.1.59"/>
    </reaction>
</comment>
<comment type="subcellular location">
    <subcellularLocation>
        <location evidence="1">Cytoplasm</location>
    </subcellularLocation>
</comment>
<comment type="similarity">
    <text evidence="1">Belongs to the thioester dehydratase family. FabZ subfamily.</text>
</comment>
<proteinExistence type="inferred from homology"/>
<sequence>MTEVNINVTEIMEALPHRYPFLLVDRVIDIAEDEITAIKNVTINEEFFQGHFPQYPVMPGVLIMEALAQAAGVLELSKPENKGKLVFYAGMDNVKYKKQVTPGDKLVLHAKFIKRRGPIAVVEAEATVDGKLAAKGTLTFALGR</sequence>
<name>FABZ_LACLM</name>
<dbReference type="EC" id="4.2.1.59" evidence="1"/>
<dbReference type="EMBL" id="AM406671">
    <property type="protein sequence ID" value="CAL98353.1"/>
    <property type="molecule type" value="Genomic_DNA"/>
</dbReference>
<dbReference type="RefSeq" id="WP_011835563.1">
    <property type="nucleotide sequence ID" value="NC_009004.1"/>
</dbReference>
<dbReference type="SMR" id="A2RM26"/>
<dbReference type="STRING" id="416870.llmg_1781"/>
<dbReference type="KEGG" id="llm:llmg_1781"/>
<dbReference type="eggNOG" id="COG0764">
    <property type="taxonomic scope" value="Bacteria"/>
</dbReference>
<dbReference type="HOGENOM" id="CLU_078912_1_2_9"/>
<dbReference type="OrthoDB" id="9772788at2"/>
<dbReference type="PhylomeDB" id="A2RM26"/>
<dbReference type="Proteomes" id="UP000000364">
    <property type="component" value="Chromosome"/>
</dbReference>
<dbReference type="GO" id="GO:0005737">
    <property type="term" value="C:cytoplasm"/>
    <property type="evidence" value="ECO:0007669"/>
    <property type="project" value="UniProtKB-SubCell"/>
</dbReference>
<dbReference type="GO" id="GO:0016020">
    <property type="term" value="C:membrane"/>
    <property type="evidence" value="ECO:0007669"/>
    <property type="project" value="GOC"/>
</dbReference>
<dbReference type="GO" id="GO:0019171">
    <property type="term" value="F:(3R)-hydroxyacyl-[acyl-carrier-protein] dehydratase activity"/>
    <property type="evidence" value="ECO:0007669"/>
    <property type="project" value="UniProtKB-EC"/>
</dbReference>
<dbReference type="GO" id="GO:0006633">
    <property type="term" value="P:fatty acid biosynthetic process"/>
    <property type="evidence" value="ECO:0007669"/>
    <property type="project" value="UniProtKB-UniRule"/>
</dbReference>
<dbReference type="GO" id="GO:0009245">
    <property type="term" value="P:lipid A biosynthetic process"/>
    <property type="evidence" value="ECO:0007669"/>
    <property type="project" value="UniProtKB-UniRule"/>
</dbReference>
<dbReference type="CDD" id="cd01288">
    <property type="entry name" value="FabZ"/>
    <property type="match status" value="1"/>
</dbReference>
<dbReference type="FunFam" id="3.10.129.10:FF:000001">
    <property type="entry name" value="3-hydroxyacyl-[acyl-carrier-protein] dehydratase FabZ"/>
    <property type="match status" value="1"/>
</dbReference>
<dbReference type="Gene3D" id="3.10.129.10">
    <property type="entry name" value="Hotdog Thioesterase"/>
    <property type="match status" value="1"/>
</dbReference>
<dbReference type="HAMAP" id="MF_00406">
    <property type="entry name" value="FabZ"/>
    <property type="match status" value="1"/>
</dbReference>
<dbReference type="InterPro" id="IPR013114">
    <property type="entry name" value="FabA_FabZ"/>
</dbReference>
<dbReference type="InterPro" id="IPR010084">
    <property type="entry name" value="FabZ"/>
</dbReference>
<dbReference type="InterPro" id="IPR029069">
    <property type="entry name" value="HotDog_dom_sf"/>
</dbReference>
<dbReference type="NCBIfam" id="TIGR01750">
    <property type="entry name" value="fabZ"/>
    <property type="match status" value="1"/>
</dbReference>
<dbReference type="NCBIfam" id="NF000582">
    <property type="entry name" value="PRK00006.1"/>
    <property type="match status" value="1"/>
</dbReference>
<dbReference type="PANTHER" id="PTHR30272">
    <property type="entry name" value="3-HYDROXYACYL-[ACYL-CARRIER-PROTEIN] DEHYDRATASE"/>
    <property type="match status" value="1"/>
</dbReference>
<dbReference type="PANTHER" id="PTHR30272:SF1">
    <property type="entry name" value="3-HYDROXYACYL-[ACYL-CARRIER-PROTEIN] DEHYDRATASE"/>
    <property type="match status" value="1"/>
</dbReference>
<dbReference type="Pfam" id="PF07977">
    <property type="entry name" value="FabA"/>
    <property type="match status" value="1"/>
</dbReference>
<dbReference type="SUPFAM" id="SSF54637">
    <property type="entry name" value="Thioesterase/thiol ester dehydrase-isomerase"/>
    <property type="match status" value="1"/>
</dbReference>